<feature type="chain" id="PRO_0000200433" description="Cytochrome b559 subunit beta">
    <location>
        <begin position="1"/>
        <end position="39"/>
    </location>
</feature>
<feature type="transmembrane region" description="Helical" evidence="1">
    <location>
        <begin position="14"/>
        <end position="30"/>
    </location>
</feature>
<feature type="binding site" description="axial binding residue" evidence="1">
    <location>
        <position position="18"/>
    </location>
    <ligand>
        <name>heme</name>
        <dbReference type="ChEBI" id="CHEBI:30413"/>
        <note>ligand shared with alpha subunit</note>
    </ligand>
    <ligandPart>
        <name>Fe</name>
        <dbReference type="ChEBI" id="CHEBI:18248"/>
    </ligandPart>
</feature>
<comment type="function">
    <text evidence="1">This b-type cytochrome is tightly associated with the reaction center of photosystem II (PSII). PSII is a light-driven water:plastoquinone oxidoreductase that uses light energy to abstract electrons from H(2)O, generating O(2) and a proton gradient subsequently used for ATP formation. It consists of a core antenna complex that captures photons, and an electron transfer chain that converts photonic excitation into a charge separation.</text>
</comment>
<comment type="cofactor">
    <cofactor evidence="1">
        <name>heme b</name>
        <dbReference type="ChEBI" id="CHEBI:60344"/>
    </cofactor>
    <text evidence="1">With its partner (PsbE) binds heme. PSII binds additional chlorophylls, carotenoids and specific lipids.</text>
</comment>
<comment type="subunit">
    <text evidence="1">Heterodimer of an alpha subunit and a beta subunit. PSII is composed of 1 copy each of membrane proteins PsbA, PsbB, PsbC, PsbD, PsbE, PsbF, PsbH, PsbI, PsbJ, PsbK, PsbL, PsbM, PsbT, PsbX, PsbY, PsbZ, Psb30/Ycf12, at least 3 peripheral proteins of the oxygen-evolving complex and a large number of cofactors. It forms dimeric complexes.</text>
</comment>
<comment type="subcellular location">
    <subcellularLocation>
        <location evidence="1">Plastid</location>
        <location evidence="1">Chloroplast thylakoid membrane</location>
        <topology evidence="1">Single-pass membrane protein</topology>
    </subcellularLocation>
</comment>
<comment type="similarity">
    <text evidence="1">Belongs to the PsbE/PsbF family.</text>
</comment>
<dbReference type="EMBL" id="AP006728">
    <property type="protein sequence ID" value="BAD26795.1"/>
    <property type="molecule type" value="Genomic_DNA"/>
</dbReference>
<dbReference type="RefSeq" id="YP_052766.1">
    <property type="nucleotide sequence ID" value="NC_005973.1"/>
</dbReference>
<dbReference type="SMR" id="Q6ENF7"/>
<dbReference type="STRING" id="4536.Q6ENF7"/>
<dbReference type="GeneID" id="2885952"/>
<dbReference type="Proteomes" id="UP000006591">
    <property type="component" value="Chloroplast"/>
</dbReference>
<dbReference type="GO" id="GO:0009535">
    <property type="term" value="C:chloroplast thylakoid membrane"/>
    <property type="evidence" value="ECO:0007669"/>
    <property type="project" value="UniProtKB-SubCell"/>
</dbReference>
<dbReference type="GO" id="GO:0009539">
    <property type="term" value="C:photosystem II reaction center"/>
    <property type="evidence" value="ECO:0007669"/>
    <property type="project" value="InterPro"/>
</dbReference>
<dbReference type="GO" id="GO:0009536">
    <property type="term" value="C:plastid"/>
    <property type="evidence" value="ECO:0000305"/>
    <property type="project" value="Gramene"/>
</dbReference>
<dbReference type="GO" id="GO:0009055">
    <property type="term" value="F:electron transfer activity"/>
    <property type="evidence" value="ECO:0007669"/>
    <property type="project" value="UniProtKB-UniRule"/>
</dbReference>
<dbReference type="GO" id="GO:0020037">
    <property type="term" value="F:heme binding"/>
    <property type="evidence" value="ECO:0007669"/>
    <property type="project" value="InterPro"/>
</dbReference>
<dbReference type="GO" id="GO:0005506">
    <property type="term" value="F:iron ion binding"/>
    <property type="evidence" value="ECO:0007669"/>
    <property type="project" value="UniProtKB-UniRule"/>
</dbReference>
<dbReference type="GO" id="GO:0009767">
    <property type="term" value="P:photosynthetic electron transport chain"/>
    <property type="evidence" value="ECO:0007669"/>
    <property type="project" value="InterPro"/>
</dbReference>
<dbReference type="HAMAP" id="MF_00643">
    <property type="entry name" value="PSII_PsbF"/>
    <property type="match status" value="1"/>
</dbReference>
<dbReference type="InterPro" id="IPR006241">
    <property type="entry name" value="PSII_cyt_b559_bsu"/>
</dbReference>
<dbReference type="InterPro" id="IPR006216">
    <property type="entry name" value="PSII_cyt_b559_CS"/>
</dbReference>
<dbReference type="InterPro" id="IPR013081">
    <property type="entry name" value="PSII_cyt_b559_N"/>
</dbReference>
<dbReference type="NCBIfam" id="TIGR01333">
    <property type="entry name" value="cyt_b559_beta"/>
    <property type="match status" value="1"/>
</dbReference>
<dbReference type="Pfam" id="PF00283">
    <property type="entry name" value="Cytochrom_B559"/>
    <property type="match status" value="1"/>
</dbReference>
<dbReference type="PIRSF" id="PIRSF000037">
    <property type="entry name" value="PsbF"/>
    <property type="match status" value="1"/>
</dbReference>
<dbReference type="SUPFAM" id="SSF161045">
    <property type="entry name" value="Cytochrome b559 subunits"/>
    <property type="match status" value="1"/>
</dbReference>
<dbReference type="PROSITE" id="PS00537">
    <property type="entry name" value="CYTOCHROME_B559"/>
    <property type="match status" value="1"/>
</dbReference>
<name>PSBF_ORYNI</name>
<protein>
    <recommendedName>
        <fullName evidence="1">Cytochrome b559 subunit beta</fullName>
    </recommendedName>
    <alternativeName>
        <fullName evidence="1">PSII reaction center subunit VI</fullName>
    </alternativeName>
</protein>
<proteinExistence type="inferred from homology"/>
<reference key="1">
    <citation type="journal article" date="2004" name="Gene">
        <title>The complete nucleotide sequence of wild rice (Oryza nivara) chloroplast genome: first genome wide comparative sequence analysis of wild and cultivated rice.</title>
        <authorList>
            <person name="Masood M.S."/>
            <person name="Nishikawa T."/>
            <person name="Fukuoka S."/>
            <person name="Njenga P.K."/>
            <person name="Tsudzuki T."/>
            <person name="Kadowaki K."/>
        </authorList>
    </citation>
    <scope>NUCLEOTIDE SEQUENCE [LARGE SCALE GENOMIC DNA]</scope>
    <source>
        <strain evidence="2">cv. SL10</strain>
    </source>
</reference>
<evidence type="ECO:0000255" key="1">
    <source>
        <dbReference type="HAMAP-Rule" id="MF_00643"/>
    </source>
</evidence>
<evidence type="ECO:0000312" key="2">
    <source>
        <dbReference type="Proteomes" id="UP000006591"/>
    </source>
</evidence>
<accession>Q6ENF7</accession>
<sequence>MTIDRTYPIFTVRWLAVHGLAVPTVFFLGSISAMQFIQR</sequence>
<organism>
    <name type="scientific">Oryza nivara</name>
    <name type="common">Indian wild rice</name>
    <name type="synonym">Oryza sativa f. spontanea</name>
    <dbReference type="NCBI Taxonomy" id="4536"/>
    <lineage>
        <taxon>Eukaryota</taxon>
        <taxon>Viridiplantae</taxon>
        <taxon>Streptophyta</taxon>
        <taxon>Embryophyta</taxon>
        <taxon>Tracheophyta</taxon>
        <taxon>Spermatophyta</taxon>
        <taxon>Magnoliopsida</taxon>
        <taxon>Liliopsida</taxon>
        <taxon>Poales</taxon>
        <taxon>Poaceae</taxon>
        <taxon>BOP clade</taxon>
        <taxon>Oryzoideae</taxon>
        <taxon>Oryzeae</taxon>
        <taxon>Oryzinae</taxon>
        <taxon>Oryza</taxon>
    </lineage>
</organism>
<keyword id="KW-0150">Chloroplast</keyword>
<keyword id="KW-0249">Electron transport</keyword>
<keyword id="KW-0349">Heme</keyword>
<keyword id="KW-0408">Iron</keyword>
<keyword id="KW-0472">Membrane</keyword>
<keyword id="KW-0479">Metal-binding</keyword>
<keyword id="KW-0602">Photosynthesis</keyword>
<keyword id="KW-0604">Photosystem II</keyword>
<keyword id="KW-0934">Plastid</keyword>
<keyword id="KW-1185">Reference proteome</keyword>
<keyword id="KW-0793">Thylakoid</keyword>
<keyword id="KW-0812">Transmembrane</keyword>
<keyword id="KW-1133">Transmembrane helix</keyword>
<keyword id="KW-0813">Transport</keyword>
<gene>
    <name evidence="1" type="primary">psbF</name>
</gene>
<geneLocation type="chloroplast"/>